<protein>
    <recommendedName>
        <fullName evidence="1">Xaa-Pro dipeptidase</fullName>
        <shortName evidence="1">X-Pro dipeptidase</shortName>
        <ecNumber evidence="1">3.4.13.9</ecNumber>
    </recommendedName>
    <alternativeName>
        <fullName evidence="1">Imidodipeptidase</fullName>
    </alternativeName>
    <alternativeName>
        <fullName evidence="1">Proline dipeptidase</fullName>
        <shortName evidence="1">Prolidase</shortName>
    </alternativeName>
</protein>
<evidence type="ECO:0000255" key="1">
    <source>
        <dbReference type="HAMAP-Rule" id="MF_01279"/>
    </source>
</evidence>
<reference key="1">
    <citation type="submission" date="2007-08" db="EMBL/GenBank/DDBJ databases">
        <authorList>
            <consortium name="The Citrobacter koseri Genome Sequencing Project"/>
            <person name="McClelland M."/>
            <person name="Sanderson E.K."/>
            <person name="Porwollik S."/>
            <person name="Spieth J."/>
            <person name="Clifton W.S."/>
            <person name="Latreille P."/>
            <person name="Courtney L."/>
            <person name="Wang C."/>
            <person name="Pepin K."/>
            <person name="Bhonagiri V."/>
            <person name="Nash W."/>
            <person name="Johnson M."/>
            <person name="Thiruvilangam P."/>
            <person name="Wilson R."/>
        </authorList>
    </citation>
    <scope>NUCLEOTIDE SEQUENCE [LARGE SCALE GENOMIC DNA]</scope>
    <source>
        <strain>ATCC BAA-895 / CDC 4225-83 / SGSC4696</strain>
    </source>
</reference>
<keyword id="KW-0224">Dipeptidase</keyword>
<keyword id="KW-0378">Hydrolase</keyword>
<keyword id="KW-0464">Manganese</keyword>
<keyword id="KW-0479">Metal-binding</keyword>
<keyword id="KW-0482">Metalloprotease</keyword>
<keyword id="KW-0645">Protease</keyword>
<keyword id="KW-1185">Reference proteome</keyword>
<organism>
    <name type="scientific">Citrobacter koseri (strain ATCC BAA-895 / CDC 4225-83 / SGSC4696)</name>
    <dbReference type="NCBI Taxonomy" id="290338"/>
    <lineage>
        <taxon>Bacteria</taxon>
        <taxon>Pseudomonadati</taxon>
        <taxon>Pseudomonadota</taxon>
        <taxon>Gammaproteobacteria</taxon>
        <taxon>Enterobacterales</taxon>
        <taxon>Enterobacteriaceae</taxon>
        <taxon>Citrobacter</taxon>
    </lineage>
</organism>
<gene>
    <name evidence="1" type="primary">pepQ</name>
    <name type="ordered locus">CKO_00190</name>
</gene>
<dbReference type="EC" id="3.4.13.9" evidence="1"/>
<dbReference type="EMBL" id="CP000822">
    <property type="protein sequence ID" value="ABV11359.1"/>
    <property type="molecule type" value="Genomic_DNA"/>
</dbReference>
<dbReference type="RefSeq" id="WP_012131193.1">
    <property type="nucleotide sequence ID" value="NC_009792.1"/>
</dbReference>
<dbReference type="SMR" id="A8ACZ6"/>
<dbReference type="STRING" id="290338.CKO_00190"/>
<dbReference type="MEROPS" id="M24.003"/>
<dbReference type="GeneID" id="45134479"/>
<dbReference type="KEGG" id="cko:CKO_00190"/>
<dbReference type="HOGENOM" id="CLU_050675_0_0_6"/>
<dbReference type="OrthoDB" id="9806388at2"/>
<dbReference type="Proteomes" id="UP000008148">
    <property type="component" value="Chromosome"/>
</dbReference>
<dbReference type="GO" id="GO:0005829">
    <property type="term" value="C:cytosol"/>
    <property type="evidence" value="ECO:0007669"/>
    <property type="project" value="TreeGrafter"/>
</dbReference>
<dbReference type="GO" id="GO:0004177">
    <property type="term" value="F:aminopeptidase activity"/>
    <property type="evidence" value="ECO:0007669"/>
    <property type="project" value="TreeGrafter"/>
</dbReference>
<dbReference type="GO" id="GO:0046872">
    <property type="term" value="F:metal ion binding"/>
    <property type="evidence" value="ECO:0007669"/>
    <property type="project" value="UniProtKB-KW"/>
</dbReference>
<dbReference type="GO" id="GO:0008235">
    <property type="term" value="F:metalloexopeptidase activity"/>
    <property type="evidence" value="ECO:0007669"/>
    <property type="project" value="UniProtKB-UniRule"/>
</dbReference>
<dbReference type="GO" id="GO:0016795">
    <property type="term" value="F:phosphoric triester hydrolase activity"/>
    <property type="evidence" value="ECO:0007669"/>
    <property type="project" value="InterPro"/>
</dbReference>
<dbReference type="GO" id="GO:0102009">
    <property type="term" value="F:proline dipeptidase activity"/>
    <property type="evidence" value="ECO:0007669"/>
    <property type="project" value="UniProtKB-EC"/>
</dbReference>
<dbReference type="GO" id="GO:0006508">
    <property type="term" value="P:proteolysis"/>
    <property type="evidence" value="ECO:0007669"/>
    <property type="project" value="UniProtKB-KW"/>
</dbReference>
<dbReference type="CDD" id="cd01087">
    <property type="entry name" value="Prolidase"/>
    <property type="match status" value="1"/>
</dbReference>
<dbReference type="FunFam" id="3.40.350.10:FF:000002">
    <property type="entry name" value="Xaa-Pro dipeptidase"/>
    <property type="match status" value="1"/>
</dbReference>
<dbReference type="FunFam" id="3.90.230.10:FF:000006">
    <property type="entry name" value="Xaa-Pro dipeptidase"/>
    <property type="match status" value="1"/>
</dbReference>
<dbReference type="Gene3D" id="3.90.230.10">
    <property type="entry name" value="Creatinase/methionine aminopeptidase superfamily"/>
    <property type="match status" value="1"/>
</dbReference>
<dbReference type="Gene3D" id="3.40.350.10">
    <property type="entry name" value="Creatinase/prolidase N-terminal domain"/>
    <property type="match status" value="1"/>
</dbReference>
<dbReference type="HAMAP" id="MF_01279">
    <property type="entry name" value="X_Pro_dipeptid"/>
    <property type="match status" value="1"/>
</dbReference>
<dbReference type="InterPro" id="IPR029149">
    <property type="entry name" value="Creatin/AminoP/Spt16_N"/>
</dbReference>
<dbReference type="InterPro" id="IPR036005">
    <property type="entry name" value="Creatinase/aminopeptidase-like"/>
</dbReference>
<dbReference type="InterPro" id="IPR048819">
    <property type="entry name" value="PepQ_N"/>
</dbReference>
<dbReference type="InterPro" id="IPR000994">
    <property type="entry name" value="Pept_M24"/>
</dbReference>
<dbReference type="InterPro" id="IPR001131">
    <property type="entry name" value="Peptidase_M24B_aminopep-P_CS"/>
</dbReference>
<dbReference type="InterPro" id="IPR052433">
    <property type="entry name" value="X-Pro_dipept-like"/>
</dbReference>
<dbReference type="InterPro" id="IPR022846">
    <property type="entry name" value="X_Pro_dipept"/>
</dbReference>
<dbReference type="NCBIfam" id="NF010133">
    <property type="entry name" value="PRK13607.1"/>
    <property type="match status" value="1"/>
</dbReference>
<dbReference type="PANTHER" id="PTHR43226">
    <property type="entry name" value="XAA-PRO AMINOPEPTIDASE 3"/>
    <property type="match status" value="1"/>
</dbReference>
<dbReference type="PANTHER" id="PTHR43226:SF8">
    <property type="entry name" value="XAA-PRO DIPEPTIDASE"/>
    <property type="match status" value="1"/>
</dbReference>
<dbReference type="Pfam" id="PF21216">
    <property type="entry name" value="PepQ_N"/>
    <property type="match status" value="1"/>
</dbReference>
<dbReference type="Pfam" id="PF00557">
    <property type="entry name" value="Peptidase_M24"/>
    <property type="match status" value="1"/>
</dbReference>
<dbReference type="SUPFAM" id="SSF55920">
    <property type="entry name" value="Creatinase/aminopeptidase"/>
    <property type="match status" value="1"/>
</dbReference>
<dbReference type="PROSITE" id="PS00491">
    <property type="entry name" value="PROLINE_PEPTIDASE"/>
    <property type="match status" value="1"/>
</dbReference>
<name>PEPQ_CITK8</name>
<comment type="function">
    <text evidence="1">Splits dipeptides with a prolyl residue in the C-terminal position.</text>
</comment>
<comment type="catalytic activity">
    <reaction evidence="1">
        <text>Xaa-L-Pro dipeptide + H2O = an L-alpha-amino acid + L-proline</text>
        <dbReference type="Rhea" id="RHEA:76407"/>
        <dbReference type="ChEBI" id="CHEBI:15377"/>
        <dbReference type="ChEBI" id="CHEBI:59869"/>
        <dbReference type="ChEBI" id="CHEBI:60039"/>
        <dbReference type="ChEBI" id="CHEBI:195196"/>
        <dbReference type="EC" id="3.4.13.9"/>
    </reaction>
</comment>
<comment type="cofactor">
    <cofactor evidence="1">
        <name>Mn(2+)</name>
        <dbReference type="ChEBI" id="CHEBI:29035"/>
    </cofactor>
    <text evidence="1">Binds 2 manganese ions per subunit.</text>
</comment>
<comment type="similarity">
    <text evidence="1">Belongs to the peptidase M24B family. Bacterial-type prolidase subfamily.</text>
</comment>
<sequence>MESLAALYKNHIVTLQERTRDALARFKLDALLIHSGELINVFLDDHPYPFKVNPQFKAWVPVTQVPNCWLLVDGVNKPKLWFYLPVDYWHNVEPLPTSFWTEEVEVIALPKADGIGSQLPAARGNIGYIGPVPERALQLDIAASNINPKGVIDYLHYYRAYKTDYELACMREAQKTAVNGHRAAEEAFRSGMSEFDINLAYLTATGHRDTDVPYSNIVALNEHASVLHYTKLDHRAPSEMRSFLLDAGAEYNGYAADLTRTWAANNDTDYAQLIKDVNDEQLALIATMKAGVSYVDYHIQFHQRIAKLLRKHQIVTDISEEAMVENNLTGPFMPHGIGHQLGLQVHDVAGFMQDDTGTHLAAPSKYPYLRCTRVLQPRMVLTIEPGIYFIESLLAPWREGQFSKHFNWQKIEALKPFGGIRIEDNVVIHENGVENMTRDLKLA</sequence>
<accession>A8ACZ6</accession>
<proteinExistence type="inferred from homology"/>
<feature type="chain" id="PRO_1000067399" description="Xaa-Pro dipeptidase">
    <location>
        <begin position="1"/>
        <end position="443"/>
    </location>
</feature>
<feature type="binding site" evidence="1">
    <location>
        <position position="246"/>
    </location>
    <ligand>
        <name>Mn(2+)</name>
        <dbReference type="ChEBI" id="CHEBI:29035"/>
        <label>2</label>
    </ligand>
</feature>
<feature type="binding site" evidence="1">
    <location>
        <position position="257"/>
    </location>
    <ligand>
        <name>Mn(2+)</name>
        <dbReference type="ChEBI" id="CHEBI:29035"/>
        <label>1</label>
    </ligand>
</feature>
<feature type="binding site" evidence="1">
    <location>
        <position position="257"/>
    </location>
    <ligand>
        <name>Mn(2+)</name>
        <dbReference type="ChEBI" id="CHEBI:29035"/>
        <label>2</label>
    </ligand>
</feature>
<feature type="binding site" evidence="1">
    <location>
        <position position="339"/>
    </location>
    <ligand>
        <name>Mn(2+)</name>
        <dbReference type="ChEBI" id="CHEBI:29035"/>
        <label>1</label>
    </ligand>
</feature>
<feature type="binding site" evidence="1">
    <location>
        <position position="384"/>
    </location>
    <ligand>
        <name>Mn(2+)</name>
        <dbReference type="ChEBI" id="CHEBI:29035"/>
        <label>1</label>
    </ligand>
</feature>
<feature type="binding site" evidence="1">
    <location>
        <position position="423"/>
    </location>
    <ligand>
        <name>Mn(2+)</name>
        <dbReference type="ChEBI" id="CHEBI:29035"/>
        <label>1</label>
    </ligand>
</feature>
<feature type="binding site" evidence="1">
    <location>
        <position position="423"/>
    </location>
    <ligand>
        <name>Mn(2+)</name>
        <dbReference type="ChEBI" id="CHEBI:29035"/>
        <label>2</label>
    </ligand>
</feature>